<organism>
    <name type="scientific">Gallus gallus</name>
    <name type="common">Chicken</name>
    <dbReference type="NCBI Taxonomy" id="9031"/>
    <lineage>
        <taxon>Eukaryota</taxon>
        <taxon>Metazoa</taxon>
        <taxon>Chordata</taxon>
        <taxon>Craniata</taxon>
        <taxon>Vertebrata</taxon>
        <taxon>Euteleostomi</taxon>
        <taxon>Archelosauria</taxon>
        <taxon>Archosauria</taxon>
        <taxon>Dinosauria</taxon>
        <taxon>Saurischia</taxon>
        <taxon>Theropoda</taxon>
        <taxon>Coelurosauria</taxon>
        <taxon>Aves</taxon>
        <taxon>Neognathae</taxon>
        <taxon>Galloanserae</taxon>
        <taxon>Galliformes</taxon>
        <taxon>Phasianidae</taxon>
        <taxon>Phasianinae</taxon>
        <taxon>Gallus</taxon>
    </lineage>
</organism>
<protein>
    <recommendedName>
        <fullName>Charged multivesicular body protein 2b</fullName>
    </recommendedName>
    <alternativeName>
        <fullName>Chromatin-modifying protein 2b</fullName>
        <shortName>CHMP2b</shortName>
    </alternativeName>
</protein>
<keyword id="KW-0175">Coiled coil</keyword>
<keyword id="KW-0963">Cytoplasm</keyword>
<keyword id="KW-0967">Endosome</keyword>
<keyword id="KW-0472">Membrane</keyword>
<keyword id="KW-0653">Protein transport</keyword>
<keyword id="KW-1185">Reference proteome</keyword>
<keyword id="KW-0813">Transport</keyword>
<name>CHM2B_CHICK</name>
<comment type="function">
    <text evidence="1">Probable core component of the endosomal sorting required for transport complex III (ESCRT-III) which is involved in multivesicular bodies (MVBs) formation and sorting of endosomal cargo proteins into MVBs. MVBs contain intraluminal vesicles (ILVs) that are generated by invagination and scission from the limiting membrane of the endosome and mostly are delivered to lysosomes enabling degradation of membrane proteins, such as stimulated growth factor receptors, lysosomal enzymes and lipids (By similarity).</text>
</comment>
<comment type="subunit">
    <text evidence="1">Probable core component of the endosomal sorting required for transport complex III (ESCRT-III). ESCRT-III components are thought to multimerize to form a flat lattice on the perimeter membrane of the endosome (By similarity).</text>
</comment>
<comment type="subcellular location">
    <subcellularLocation>
        <location evidence="1">Cytoplasm</location>
        <location evidence="1">Cytosol</location>
    </subcellularLocation>
    <subcellularLocation>
        <location evidence="1">Late endosome membrane</location>
        <topology evidence="1">Peripheral membrane protein</topology>
    </subcellularLocation>
</comment>
<comment type="similarity">
    <text evidence="4">Belongs to the SNF7 family.</text>
</comment>
<accession>Q5F3A2</accession>
<gene>
    <name type="primary">CHMP2B</name>
    <name type="ORF">RCJMB04_25h19</name>
</gene>
<reference key="1">
    <citation type="journal article" date="2005" name="Genome Biol.">
        <title>Full-length cDNAs from chicken bursal lymphocytes to facilitate gene function analysis.</title>
        <authorList>
            <person name="Caldwell R.B."/>
            <person name="Kierzek A.M."/>
            <person name="Arakawa H."/>
            <person name="Bezzubov Y."/>
            <person name="Zaim J."/>
            <person name="Fiedler P."/>
            <person name="Kutter S."/>
            <person name="Blagodatski A."/>
            <person name="Kostovska D."/>
            <person name="Koter M."/>
            <person name="Plachy J."/>
            <person name="Carninci P."/>
            <person name="Hayashizaki Y."/>
            <person name="Buerstedde J.-M."/>
        </authorList>
    </citation>
    <scope>NUCLEOTIDE SEQUENCE [LARGE SCALE MRNA]</scope>
    <source>
        <strain>CB</strain>
        <tissue>Bursa of Fabricius</tissue>
    </source>
</reference>
<evidence type="ECO:0000250" key="1"/>
<evidence type="ECO:0000255" key="2"/>
<evidence type="ECO:0000256" key="3">
    <source>
        <dbReference type="SAM" id="MobiDB-lite"/>
    </source>
</evidence>
<evidence type="ECO:0000305" key="4"/>
<feature type="chain" id="PRO_0000211472" description="Charged multivesicular body protein 2b">
    <location>
        <begin position="1"/>
        <end position="214"/>
    </location>
</feature>
<feature type="region of interest" description="Disordered" evidence="3">
    <location>
        <begin position="179"/>
        <end position="201"/>
    </location>
</feature>
<feature type="coiled-coil region" evidence="2">
    <location>
        <begin position="25"/>
        <end position="55"/>
    </location>
</feature>
<feature type="short sequence motif" description="MIT-interacting motif">
    <location>
        <begin position="202"/>
        <end position="212"/>
    </location>
</feature>
<feature type="compositionally biased region" description="Polar residues" evidence="3">
    <location>
        <begin position="190"/>
        <end position="199"/>
    </location>
</feature>
<proteinExistence type="evidence at transcript level"/>
<sequence length="214" mass="24060">MASLFKKKTVDDIIKEQNRELRGTQRTITRDRAALEKQERQLELEIKKMAKTGNKEACKVLAKQLVQLRKQKNRTYAVSSKVTSMSTQTKVMNSQMKMAGAMSTTAKTMQAVNKKMDPQKTLQTMQNFQKENMKMEMTEEMINDTLDDIFDASDEEEESQDIVNQVLDEIGIEISGKMAKAPSAARGLPSASTSKASTISDEEIERQLKALGVD</sequence>
<dbReference type="EMBL" id="AJ851748">
    <property type="protein sequence ID" value="CAH65382.1"/>
    <property type="molecule type" value="mRNA"/>
</dbReference>
<dbReference type="RefSeq" id="NP_001025963.1">
    <property type="nucleotide sequence ID" value="NM_001030792.2"/>
</dbReference>
<dbReference type="SMR" id="Q5F3A2"/>
<dbReference type="FunCoup" id="Q5F3A2">
    <property type="interactions" value="1279"/>
</dbReference>
<dbReference type="STRING" id="9031.ENSGALP00000024944"/>
<dbReference type="PaxDb" id="9031-ENSGALP00000024944"/>
<dbReference type="GeneID" id="418461"/>
<dbReference type="KEGG" id="gga:418461"/>
<dbReference type="CTD" id="25978"/>
<dbReference type="VEuPathDB" id="HostDB:geneid_418461"/>
<dbReference type="eggNOG" id="KOG3231">
    <property type="taxonomic scope" value="Eukaryota"/>
</dbReference>
<dbReference type="InParanoid" id="Q5F3A2"/>
<dbReference type="OrthoDB" id="5594417at2759"/>
<dbReference type="PhylomeDB" id="Q5F3A2"/>
<dbReference type="PRO" id="PR:Q5F3A2"/>
<dbReference type="Proteomes" id="UP000000539">
    <property type="component" value="Unassembled WGS sequence"/>
</dbReference>
<dbReference type="GO" id="GO:0005829">
    <property type="term" value="C:cytosol"/>
    <property type="evidence" value="ECO:0007669"/>
    <property type="project" value="UniProtKB-SubCell"/>
</dbReference>
<dbReference type="GO" id="GO:0000815">
    <property type="term" value="C:ESCRT III complex"/>
    <property type="evidence" value="ECO:0000318"/>
    <property type="project" value="GO_Central"/>
</dbReference>
<dbReference type="GO" id="GO:0031902">
    <property type="term" value="C:late endosome membrane"/>
    <property type="evidence" value="ECO:0007669"/>
    <property type="project" value="UniProtKB-SubCell"/>
</dbReference>
<dbReference type="GO" id="GO:0005771">
    <property type="term" value="C:multivesicular body"/>
    <property type="evidence" value="ECO:0000318"/>
    <property type="project" value="GO_Central"/>
</dbReference>
<dbReference type="GO" id="GO:0032509">
    <property type="term" value="P:endosome transport via multivesicular body sorting pathway"/>
    <property type="evidence" value="ECO:0000318"/>
    <property type="project" value="GO_Central"/>
</dbReference>
<dbReference type="GO" id="GO:0045324">
    <property type="term" value="P:late endosome to vacuole transport"/>
    <property type="evidence" value="ECO:0000318"/>
    <property type="project" value="GO_Central"/>
</dbReference>
<dbReference type="GO" id="GO:0015031">
    <property type="term" value="P:protein transport"/>
    <property type="evidence" value="ECO:0000318"/>
    <property type="project" value="GO_Central"/>
</dbReference>
<dbReference type="Gene3D" id="6.10.140.1230">
    <property type="match status" value="1"/>
</dbReference>
<dbReference type="InterPro" id="IPR005024">
    <property type="entry name" value="Snf7_fam"/>
</dbReference>
<dbReference type="PANTHER" id="PTHR10476">
    <property type="entry name" value="CHARGED MULTIVESICULAR BODY PROTEIN"/>
    <property type="match status" value="1"/>
</dbReference>
<dbReference type="Pfam" id="PF03357">
    <property type="entry name" value="Snf7"/>
    <property type="match status" value="1"/>
</dbReference>